<feature type="chain" id="PRO_1000199818" description="Ribosomal RNA large subunit methyltransferase H">
    <location>
        <begin position="1"/>
        <end position="155"/>
    </location>
</feature>
<feature type="binding site" evidence="1">
    <location>
        <position position="72"/>
    </location>
    <ligand>
        <name>S-adenosyl-L-methionine</name>
        <dbReference type="ChEBI" id="CHEBI:59789"/>
    </ligand>
</feature>
<feature type="binding site" evidence="1">
    <location>
        <position position="103"/>
    </location>
    <ligand>
        <name>S-adenosyl-L-methionine</name>
        <dbReference type="ChEBI" id="CHEBI:59789"/>
    </ligand>
</feature>
<feature type="binding site" evidence="1">
    <location>
        <begin position="122"/>
        <end position="127"/>
    </location>
    <ligand>
        <name>S-adenosyl-L-methionine</name>
        <dbReference type="ChEBI" id="CHEBI:59789"/>
    </ligand>
</feature>
<keyword id="KW-0963">Cytoplasm</keyword>
<keyword id="KW-0489">Methyltransferase</keyword>
<keyword id="KW-1185">Reference proteome</keyword>
<keyword id="KW-0698">rRNA processing</keyword>
<keyword id="KW-0949">S-adenosyl-L-methionine</keyword>
<keyword id="KW-0808">Transferase</keyword>
<comment type="function">
    <text evidence="1">Specifically methylates the pseudouridine at position 1915 (m3Psi1915) in 23S rRNA.</text>
</comment>
<comment type="catalytic activity">
    <reaction evidence="1">
        <text>pseudouridine(1915) in 23S rRNA + S-adenosyl-L-methionine = N(3)-methylpseudouridine(1915) in 23S rRNA + S-adenosyl-L-homocysteine + H(+)</text>
        <dbReference type="Rhea" id="RHEA:42752"/>
        <dbReference type="Rhea" id="RHEA-COMP:10221"/>
        <dbReference type="Rhea" id="RHEA-COMP:10222"/>
        <dbReference type="ChEBI" id="CHEBI:15378"/>
        <dbReference type="ChEBI" id="CHEBI:57856"/>
        <dbReference type="ChEBI" id="CHEBI:59789"/>
        <dbReference type="ChEBI" id="CHEBI:65314"/>
        <dbReference type="ChEBI" id="CHEBI:74486"/>
        <dbReference type="EC" id="2.1.1.177"/>
    </reaction>
</comment>
<comment type="subunit">
    <text evidence="1">Homodimer.</text>
</comment>
<comment type="subcellular location">
    <subcellularLocation>
        <location evidence="1">Cytoplasm</location>
    </subcellularLocation>
</comment>
<comment type="similarity">
    <text evidence="1">Belongs to the RNA methyltransferase RlmH family.</text>
</comment>
<sequence length="155" mass="17341">MKLQLVAVGTKMPDWVQTGFTEYLRRFPKDMPFELIEIPAGKRGKNADIKRILDKEGEQMLAAAGKNRIVTLDIPGKPWDTPQLAAELERWKLDGRDVSLLIGGPEGLSPACKAAAEQSWSLSALTLPHPLVRVLVAESLYRAWSITTNHPYHRE</sequence>
<protein>
    <recommendedName>
        <fullName evidence="1">Ribosomal RNA large subunit methyltransferase H</fullName>
        <ecNumber evidence="1">2.1.1.177</ecNumber>
    </recommendedName>
    <alternativeName>
        <fullName evidence="1">23S rRNA (pseudouridine1915-N3)-methyltransferase</fullName>
    </alternativeName>
    <alternativeName>
        <fullName evidence="1">23S rRNA m3Psi1915 methyltransferase</fullName>
    </alternativeName>
    <alternativeName>
        <fullName evidence="1">rRNA (pseudouridine-N3-)-methyltransferase RlmH</fullName>
    </alternativeName>
</protein>
<evidence type="ECO:0000255" key="1">
    <source>
        <dbReference type="HAMAP-Rule" id="MF_00658"/>
    </source>
</evidence>
<proteinExistence type="inferred from homology"/>
<organism>
    <name type="scientific">Escherichia coli O127:H6 (strain E2348/69 / EPEC)</name>
    <dbReference type="NCBI Taxonomy" id="574521"/>
    <lineage>
        <taxon>Bacteria</taxon>
        <taxon>Pseudomonadati</taxon>
        <taxon>Pseudomonadota</taxon>
        <taxon>Gammaproteobacteria</taxon>
        <taxon>Enterobacterales</taxon>
        <taxon>Enterobacteriaceae</taxon>
        <taxon>Escherichia</taxon>
    </lineage>
</organism>
<accession>B7UKS6</accession>
<dbReference type="EC" id="2.1.1.177" evidence="1"/>
<dbReference type="EMBL" id="FM180568">
    <property type="protein sequence ID" value="CAS08084.1"/>
    <property type="molecule type" value="Genomic_DNA"/>
</dbReference>
<dbReference type="RefSeq" id="WP_000776104.1">
    <property type="nucleotide sequence ID" value="NC_011601.1"/>
</dbReference>
<dbReference type="SMR" id="B7UKS6"/>
<dbReference type="GeneID" id="93776846"/>
<dbReference type="KEGG" id="ecg:E2348C_0536"/>
<dbReference type="HOGENOM" id="CLU_100552_1_0_6"/>
<dbReference type="Proteomes" id="UP000008205">
    <property type="component" value="Chromosome"/>
</dbReference>
<dbReference type="GO" id="GO:0005737">
    <property type="term" value="C:cytoplasm"/>
    <property type="evidence" value="ECO:0007669"/>
    <property type="project" value="UniProtKB-SubCell"/>
</dbReference>
<dbReference type="GO" id="GO:0070038">
    <property type="term" value="F:rRNA (pseudouridine-N3-)-methyltransferase activity"/>
    <property type="evidence" value="ECO:0007669"/>
    <property type="project" value="UniProtKB-UniRule"/>
</dbReference>
<dbReference type="CDD" id="cd18081">
    <property type="entry name" value="RlmH-like"/>
    <property type="match status" value="1"/>
</dbReference>
<dbReference type="FunFam" id="3.40.1280.10:FF:000004">
    <property type="entry name" value="Ribosomal RNA large subunit methyltransferase H"/>
    <property type="match status" value="1"/>
</dbReference>
<dbReference type="Gene3D" id="3.40.1280.10">
    <property type="match status" value="1"/>
</dbReference>
<dbReference type="HAMAP" id="MF_00658">
    <property type="entry name" value="23SrRNA_methyltr_H"/>
    <property type="match status" value="1"/>
</dbReference>
<dbReference type="InterPro" id="IPR029028">
    <property type="entry name" value="Alpha/beta_knot_MTases"/>
</dbReference>
<dbReference type="InterPro" id="IPR003742">
    <property type="entry name" value="RlmH-like"/>
</dbReference>
<dbReference type="InterPro" id="IPR029026">
    <property type="entry name" value="tRNA_m1G_MTases_N"/>
</dbReference>
<dbReference type="NCBIfam" id="NF000984">
    <property type="entry name" value="PRK00103.1-1"/>
    <property type="match status" value="1"/>
</dbReference>
<dbReference type="NCBIfam" id="NF000986">
    <property type="entry name" value="PRK00103.1-4"/>
    <property type="match status" value="1"/>
</dbReference>
<dbReference type="NCBIfam" id="TIGR00246">
    <property type="entry name" value="tRNA_RlmH_YbeA"/>
    <property type="match status" value="1"/>
</dbReference>
<dbReference type="PANTHER" id="PTHR33603">
    <property type="entry name" value="METHYLTRANSFERASE"/>
    <property type="match status" value="1"/>
</dbReference>
<dbReference type="PANTHER" id="PTHR33603:SF1">
    <property type="entry name" value="RIBOSOMAL RNA LARGE SUBUNIT METHYLTRANSFERASE H"/>
    <property type="match status" value="1"/>
</dbReference>
<dbReference type="Pfam" id="PF02590">
    <property type="entry name" value="SPOUT_MTase"/>
    <property type="match status" value="1"/>
</dbReference>
<dbReference type="PIRSF" id="PIRSF004505">
    <property type="entry name" value="MT_bac"/>
    <property type="match status" value="1"/>
</dbReference>
<dbReference type="SUPFAM" id="SSF75217">
    <property type="entry name" value="alpha/beta knot"/>
    <property type="match status" value="1"/>
</dbReference>
<name>RLMH_ECO27</name>
<reference key="1">
    <citation type="journal article" date="2009" name="J. Bacteriol.">
        <title>Complete genome sequence and comparative genome analysis of enteropathogenic Escherichia coli O127:H6 strain E2348/69.</title>
        <authorList>
            <person name="Iguchi A."/>
            <person name="Thomson N.R."/>
            <person name="Ogura Y."/>
            <person name="Saunders D."/>
            <person name="Ooka T."/>
            <person name="Henderson I.R."/>
            <person name="Harris D."/>
            <person name="Asadulghani M."/>
            <person name="Kurokawa K."/>
            <person name="Dean P."/>
            <person name="Kenny B."/>
            <person name="Quail M.A."/>
            <person name="Thurston S."/>
            <person name="Dougan G."/>
            <person name="Hayashi T."/>
            <person name="Parkhill J."/>
            <person name="Frankel G."/>
        </authorList>
    </citation>
    <scope>NUCLEOTIDE SEQUENCE [LARGE SCALE GENOMIC DNA]</scope>
    <source>
        <strain>E2348/69 / EPEC</strain>
    </source>
</reference>
<gene>
    <name evidence="1" type="primary">rlmH</name>
    <name type="ordered locus">E2348C_0536</name>
</gene>